<gene>
    <name evidence="1" type="primary">yacL</name>
    <name type="ordered locus">ECSE_0119</name>
</gene>
<organism>
    <name type="scientific">Escherichia coli (strain SE11)</name>
    <dbReference type="NCBI Taxonomy" id="409438"/>
    <lineage>
        <taxon>Bacteria</taxon>
        <taxon>Pseudomonadati</taxon>
        <taxon>Pseudomonadota</taxon>
        <taxon>Gammaproteobacteria</taxon>
        <taxon>Enterobacterales</taxon>
        <taxon>Enterobacteriaceae</taxon>
        <taxon>Escherichia</taxon>
    </lineage>
</organism>
<name>YACL_ECOSE</name>
<reference key="1">
    <citation type="journal article" date="2008" name="DNA Res.">
        <title>Complete genome sequence and comparative analysis of the wild-type commensal Escherichia coli strain SE11 isolated from a healthy adult.</title>
        <authorList>
            <person name="Oshima K."/>
            <person name="Toh H."/>
            <person name="Ogura Y."/>
            <person name="Sasamoto H."/>
            <person name="Morita H."/>
            <person name="Park S.-H."/>
            <person name="Ooka T."/>
            <person name="Iyoda S."/>
            <person name="Taylor T.D."/>
            <person name="Hayashi T."/>
            <person name="Itoh K."/>
            <person name="Hattori M."/>
        </authorList>
    </citation>
    <scope>NUCLEOTIDE SEQUENCE [LARGE SCALE GENOMIC DNA]</scope>
    <source>
        <strain>SE11</strain>
    </source>
</reference>
<proteinExistence type="inferred from homology"/>
<dbReference type="EMBL" id="AP009240">
    <property type="protein sequence ID" value="BAG75643.1"/>
    <property type="molecule type" value="Genomic_DNA"/>
</dbReference>
<dbReference type="RefSeq" id="WP_000384306.1">
    <property type="nucleotide sequence ID" value="NC_011415.1"/>
</dbReference>
<dbReference type="GeneID" id="93777317"/>
<dbReference type="KEGG" id="ecy:ECSE_0119"/>
<dbReference type="HOGENOM" id="CLU_139226_0_0_6"/>
<dbReference type="Proteomes" id="UP000008199">
    <property type="component" value="Chromosome"/>
</dbReference>
<dbReference type="HAMAP" id="MF_01053">
    <property type="entry name" value="UPF0231"/>
    <property type="match status" value="1"/>
</dbReference>
<dbReference type="InterPro" id="IPR008249">
    <property type="entry name" value="UPF0231"/>
</dbReference>
<dbReference type="NCBIfam" id="NF003574">
    <property type="entry name" value="PRK05248.1-1"/>
    <property type="match status" value="1"/>
</dbReference>
<dbReference type="NCBIfam" id="NF003576">
    <property type="entry name" value="PRK05248.1-3"/>
    <property type="match status" value="1"/>
</dbReference>
<dbReference type="Pfam" id="PF06062">
    <property type="entry name" value="UPF0231"/>
    <property type="match status" value="1"/>
</dbReference>
<dbReference type="PIRSF" id="PIRSF006287">
    <property type="entry name" value="UCP006287"/>
    <property type="match status" value="1"/>
</dbReference>
<accession>B6HZ94</accession>
<comment type="similarity">
    <text evidence="1">Belongs to the UPF0231 family.</text>
</comment>
<sequence length="120" mass="13942">MDYEFLRDITGVVKVRMSMGHEVVGHWFNEEVKENLALLDEVEQAAHALKGSERSWQRAGHEYTLWMDGEEVMVRANQLEFAGDEMEEGMNYYDEESLSLCGVEDFLQVVAAYRNFVQQK</sequence>
<evidence type="ECO:0000255" key="1">
    <source>
        <dbReference type="HAMAP-Rule" id="MF_01053"/>
    </source>
</evidence>
<feature type="chain" id="PRO_1000136295" description="UPF0231 protein YacL">
    <location>
        <begin position="1"/>
        <end position="120"/>
    </location>
</feature>
<protein>
    <recommendedName>
        <fullName evidence="1">UPF0231 protein YacL</fullName>
    </recommendedName>
</protein>